<organism>
    <name type="scientific">Cereibacter sphaeroides (strain ATCC 17029 / ATH 2.4.9)</name>
    <name type="common">Rhodobacter sphaeroides</name>
    <dbReference type="NCBI Taxonomy" id="349101"/>
    <lineage>
        <taxon>Bacteria</taxon>
        <taxon>Pseudomonadati</taxon>
        <taxon>Pseudomonadota</taxon>
        <taxon>Alphaproteobacteria</taxon>
        <taxon>Rhodobacterales</taxon>
        <taxon>Paracoccaceae</taxon>
        <taxon>Cereibacter</taxon>
    </lineage>
</organism>
<reference key="1">
    <citation type="submission" date="2007-02" db="EMBL/GenBank/DDBJ databases">
        <title>Complete sequence of chromosome 1 of Rhodobacter sphaeroides ATCC 17029.</title>
        <authorList>
            <person name="Copeland A."/>
            <person name="Lucas S."/>
            <person name="Lapidus A."/>
            <person name="Barry K."/>
            <person name="Detter J.C."/>
            <person name="Glavina del Rio T."/>
            <person name="Hammon N."/>
            <person name="Israni S."/>
            <person name="Dalin E."/>
            <person name="Tice H."/>
            <person name="Pitluck S."/>
            <person name="Kiss H."/>
            <person name="Brettin T."/>
            <person name="Bruce D."/>
            <person name="Han C."/>
            <person name="Tapia R."/>
            <person name="Gilna P."/>
            <person name="Schmutz J."/>
            <person name="Larimer F."/>
            <person name="Land M."/>
            <person name="Hauser L."/>
            <person name="Kyrpides N."/>
            <person name="Mikhailova N."/>
            <person name="Richardson P."/>
            <person name="Mackenzie C."/>
            <person name="Choudhary M."/>
            <person name="Donohue T.J."/>
            <person name="Kaplan S."/>
        </authorList>
    </citation>
    <scope>NUCLEOTIDE SEQUENCE [LARGE SCALE GENOMIC DNA]</scope>
    <source>
        <strain>ATCC 17029 / ATH 2.4.9</strain>
    </source>
</reference>
<comment type="function">
    <text evidence="1">Nucleotidase that shows phosphatase activity on nucleoside 5'-monophosphates.</text>
</comment>
<comment type="catalytic activity">
    <reaction evidence="1">
        <text>a ribonucleoside 5'-phosphate + H2O = a ribonucleoside + phosphate</text>
        <dbReference type="Rhea" id="RHEA:12484"/>
        <dbReference type="ChEBI" id="CHEBI:15377"/>
        <dbReference type="ChEBI" id="CHEBI:18254"/>
        <dbReference type="ChEBI" id="CHEBI:43474"/>
        <dbReference type="ChEBI" id="CHEBI:58043"/>
        <dbReference type="EC" id="3.1.3.5"/>
    </reaction>
</comment>
<comment type="cofactor">
    <cofactor evidence="1">
        <name>a divalent metal cation</name>
        <dbReference type="ChEBI" id="CHEBI:60240"/>
    </cofactor>
    <text evidence="1">Binds 1 divalent metal cation per subunit.</text>
</comment>
<comment type="subcellular location">
    <subcellularLocation>
        <location evidence="1">Cytoplasm</location>
    </subcellularLocation>
</comment>
<comment type="similarity">
    <text evidence="1">Belongs to the SurE nucleotidase family.</text>
</comment>
<name>SURE_CERS1</name>
<protein>
    <recommendedName>
        <fullName evidence="1">5'-nucleotidase SurE</fullName>
        <ecNumber evidence="1">3.1.3.5</ecNumber>
    </recommendedName>
    <alternativeName>
        <fullName evidence="1">Nucleoside 5'-monophosphate phosphohydrolase</fullName>
    </alternativeName>
</protein>
<sequence length="261" mass="27873">MRILITNDDGINAPGLEVLEQIALQLAGPDGEVWTVAPAFEQSGVSHAISYTHPMMIAKLGPRRYAAEGSPADCVLAALYDVLQGARPDLVLSGVNRGNNSAENVLYSGTVGGALEAALQGLPAIALSQFLGPETEGLADPFECARTHGARIVRLLLERGLWDGEDYRLFYNVNFPPVPAANLRGHRVAAQGFRRDTSFGVEPHMSPSGRRFLWIRGGAQQSPTLPGTDAAVNLEGFVSITPLRADLTAHDRLAELEALIG</sequence>
<evidence type="ECO:0000255" key="1">
    <source>
        <dbReference type="HAMAP-Rule" id="MF_00060"/>
    </source>
</evidence>
<gene>
    <name evidence="1" type="primary">surE</name>
    <name type="ordered locus">Rsph17029_1205</name>
</gene>
<keyword id="KW-0963">Cytoplasm</keyword>
<keyword id="KW-0378">Hydrolase</keyword>
<keyword id="KW-0479">Metal-binding</keyword>
<keyword id="KW-0547">Nucleotide-binding</keyword>
<proteinExistence type="inferred from homology"/>
<feature type="chain" id="PRO_1000007784" description="5'-nucleotidase SurE">
    <location>
        <begin position="1"/>
        <end position="261"/>
    </location>
</feature>
<feature type="binding site" evidence="1">
    <location>
        <position position="8"/>
    </location>
    <ligand>
        <name>a divalent metal cation</name>
        <dbReference type="ChEBI" id="CHEBI:60240"/>
    </ligand>
</feature>
<feature type="binding site" evidence="1">
    <location>
        <position position="9"/>
    </location>
    <ligand>
        <name>a divalent metal cation</name>
        <dbReference type="ChEBI" id="CHEBI:60240"/>
    </ligand>
</feature>
<feature type="binding site" evidence="1">
    <location>
        <position position="43"/>
    </location>
    <ligand>
        <name>a divalent metal cation</name>
        <dbReference type="ChEBI" id="CHEBI:60240"/>
    </ligand>
</feature>
<feature type="binding site" evidence="1">
    <location>
        <position position="96"/>
    </location>
    <ligand>
        <name>a divalent metal cation</name>
        <dbReference type="ChEBI" id="CHEBI:60240"/>
    </ligand>
</feature>
<dbReference type="EC" id="3.1.3.5" evidence="1"/>
<dbReference type="EMBL" id="CP000577">
    <property type="protein sequence ID" value="ABN76315.1"/>
    <property type="molecule type" value="Genomic_DNA"/>
</dbReference>
<dbReference type="RefSeq" id="WP_011840864.1">
    <property type="nucleotide sequence ID" value="NC_009049.1"/>
</dbReference>
<dbReference type="SMR" id="A3PIZ9"/>
<dbReference type="KEGG" id="rsh:Rsph17029_1205"/>
<dbReference type="HOGENOM" id="CLU_045192_1_2_5"/>
<dbReference type="GO" id="GO:0005737">
    <property type="term" value="C:cytoplasm"/>
    <property type="evidence" value="ECO:0007669"/>
    <property type="project" value="UniProtKB-SubCell"/>
</dbReference>
<dbReference type="GO" id="GO:0008254">
    <property type="term" value="F:3'-nucleotidase activity"/>
    <property type="evidence" value="ECO:0007669"/>
    <property type="project" value="TreeGrafter"/>
</dbReference>
<dbReference type="GO" id="GO:0008253">
    <property type="term" value="F:5'-nucleotidase activity"/>
    <property type="evidence" value="ECO:0007669"/>
    <property type="project" value="UniProtKB-UniRule"/>
</dbReference>
<dbReference type="GO" id="GO:0004309">
    <property type="term" value="F:exopolyphosphatase activity"/>
    <property type="evidence" value="ECO:0007669"/>
    <property type="project" value="TreeGrafter"/>
</dbReference>
<dbReference type="GO" id="GO:0046872">
    <property type="term" value="F:metal ion binding"/>
    <property type="evidence" value="ECO:0007669"/>
    <property type="project" value="UniProtKB-UniRule"/>
</dbReference>
<dbReference type="GO" id="GO:0000166">
    <property type="term" value="F:nucleotide binding"/>
    <property type="evidence" value="ECO:0007669"/>
    <property type="project" value="UniProtKB-KW"/>
</dbReference>
<dbReference type="Gene3D" id="3.40.1210.10">
    <property type="entry name" value="Survival protein SurE-like phosphatase/nucleotidase"/>
    <property type="match status" value="1"/>
</dbReference>
<dbReference type="HAMAP" id="MF_00060">
    <property type="entry name" value="SurE"/>
    <property type="match status" value="1"/>
</dbReference>
<dbReference type="InterPro" id="IPR030048">
    <property type="entry name" value="SurE"/>
</dbReference>
<dbReference type="InterPro" id="IPR002828">
    <property type="entry name" value="SurE-like_Pase/nucleotidase"/>
</dbReference>
<dbReference type="InterPro" id="IPR036523">
    <property type="entry name" value="SurE-like_sf"/>
</dbReference>
<dbReference type="NCBIfam" id="NF001490">
    <property type="entry name" value="PRK00346.1-4"/>
    <property type="match status" value="1"/>
</dbReference>
<dbReference type="NCBIfam" id="NF010541">
    <property type="entry name" value="PRK13931.1"/>
    <property type="match status" value="1"/>
</dbReference>
<dbReference type="NCBIfam" id="TIGR00087">
    <property type="entry name" value="surE"/>
    <property type="match status" value="1"/>
</dbReference>
<dbReference type="PANTHER" id="PTHR30457">
    <property type="entry name" value="5'-NUCLEOTIDASE SURE"/>
    <property type="match status" value="1"/>
</dbReference>
<dbReference type="PANTHER" id="PTHR30457:SF12">
    <property type="entry name" value="5'_3'-NUCLEOTIDASE SURE"/>
    <property type="match status" value="1"/>
</dbReference>
<dbReference type="Pfam" id="PF01975">
    <property type="entry name" value="SurE"/>
    <property type="match status" value="1"/>
</dbReference>
<dbReference type="SUPFAM" id="SSF64167">
    <property type="entry name" value="SurE-like"/>
    <property type="match status" value="1"/>
</dbReference>
<accession>A3PIZ9</accession>